<accession>B1LPS5</accession>
<evidence type="ECO:0000250" key="1"/>
<evidence type="ECO:0000255" key="2">
    <source>
        <dbReference type="HAMAP-Rule" id="MF_01289"/>
    </source>
</evidence>
<reference key="1">
    <citation type="journal article" date="2008" name="J. Bacteriol.">
        <title>Insights into the environmental resistance gene pool from the genome sequence of the multidrug-resistant environmental isolate Escherichia coli SMS-3-5.</title>
        <authorList>
            <person name="Fricke W.F."/>
            <person name="Wright M.S."/>
            <person name="Lindell A.H."/>
            <person name="Harkins D.M."/>
            <person name="Baker-Austin C."/>
            <person name="Ravel J."/>
            <person name="Stepanauskas R."/>
        </authorList>
    </citation>
    <scope>NUCLEOTIDE SEQUENCE [LARGE SCALE GENOMIC DNA]</scope>
    <source>
        <strain>SMS-3-5 / SECEC</strain>
    </source>
</reference>
<gene>
    <name evidence="2" type="primary">dgoD1</name>
    <name type="ordered locus">EcSMS35_1095</name>
</gene>
<sequence length="382" mass="42550">MKITKITTYRLPPRWMFLKIETDEGVVGWGEPVIEGRARTVEAAVHELGDYLIGQDPSRINDLWQVMYRAGFYRGGPILMSAIAGIDQALWDIKGKVLNSPVWQLMGGLVRDKIKAYSWVGGDRPANVIDGIKILREIGFDTFKLNGCEELGLIDNSRAVDAAVNTVAQIREAFGNQIEFGLDFHGRVSAPMAKVLIKELEPYRPLFIEEPVLAEQAEYYPKLAAQTHIPLAAGERMFSRFDFKRVLEAGGISILQPDLSHAGGITECYKIAGMAEAYDVTLAPHCPLGPIALAACLHIDFVSYNAVLQEQSMGIHYNKGAELLDFVKNKEDFSMVGGFFKPLTKPGLGVEIDEAKVIEFSKNAPDWRNPLWRHEDNSVAEW</sequence>
<feature type="chain" id="PRO_0000352624" description="D-galactonate dehydratase 1">
    <location>
        <begin position="1"/>
        <end position="382"/>
    </location>
</feature>
<feature type="active site" description="Proton donor" evidence="1">
    <location>
        <position position="185"/>
    </location>
</feature>
<feature type="active site" description="Proton acceptor" evidence="1">
    <location>
        <position position="285"/>
    </location>
</feature>
<feature type="binding site" evidence="2">
    <location>
        <position position="183"/>
    </location>
    <ligand>
        <name>Mg(2+)</name>
        <dbReference type="ChEBI" id="CHEBI:18420"/>
    </ligand>
</feature>
<feature type="binding site" evidence="2">
    <location>
        <position position="209"/>
    </location>
    <ligand>
        <name>Mg(2+)</name>
        <dbReference type="ChEBI" id="CHEBI:18420"/>
    </ligand>
</feature>
<feature type="binding site" evidence="2">
    <location>
        <position position="235"/>
    </location>
    <ligand>
        <name>Mg(2+)</name>
        <dbReference type="ChEBI" id="CHEBI:18420"/>
    </ligand>
</feature>
<feature type="site" description="Increases basicity of active site His" evidence="2">
    <location>
        <position position="258"/>
    </location>
</feature>
<feature type="site" description="Transition state stabilizer" evidence="2">
    <location>
        <position position="310"/>
    </location>
</feature>
<comment type="function">
    <text evidence="2">Catalyzes the dehydration of D-galactonate to 2-keto-3-deoxy-D-galactonate.</text>
</comment>
<comment type="catalytic activity">
    <reaction evidence="2">
        <text>D-galactonate = 2-dehydro-3-deoxy-D-galactonate + H2O</text>
        <dbReference type="Rhea" id="RHEA:18649"/>
        <dbReference type="ChEBI" id="CHEBI:12931"/>
        <dbReference type="ChEBI" id="CHEBI:15377"/>
        <dbReference type="ChEBI" id="CHEBI:57989"/>
        <dbReference type="EC" id="4.2.1.6"/>
    </reaction>
</comment>
<comment type="cofactor">
    <cofactor evidence="2">
        <name>Mg(2+)</name>
        <dbReference type="ChEBI" id="CHEBI:18420"/>
    </cofactor>
    <text evidence="2">Binds 1 Mg(2+) ion per subunit.</text>
</comment>
<comment type="pathway">
    <text evidence="2">Carbohydrate acid metabolism; D-galactonate degradation; D-glyceraldehyde 3-phosphate and pyruvate from D-galactonate: step 1/3.</text>
</comment>
<comment type="miscellaneous">
    <text evidence="2">Reaction proceeds via an anti dehydration.</text>
</comment>
<comment type="similarity">
    <text evidence="2">Belongs to the mandelate racemase/muconate lactonizing enzyme family. GalD subfamily.</text>
</comment>
<proteinExistence type="inferred from homology"/>
<protein>
    <recommendedName>
        <fullName evidence="2">D-galactonate dehydratase 1</fullName>
        <shortName evidence="2">GalD 1</shortName>
        <ecNumber evidence="2">4.2.1.6</ecNumber>
    </recommendedName>
</protein>
<name>DGOD1_ECOSM</name>
<keyword id="KW-0456">Lyase</keyword>
<keyword id="KW-0460">Magnesium</keyword>
<keyword id="KW-0479">Metal-binding</keyword>
<dbReference type="EC" id="4.2.1.6" evidence="2"/>
<dbReference type="EMBL" id="CP000970">
    <property type="protein sequence ID" value="ACB16890.1"/>
    <property type="molecule type" value="Genomic_DNA"/>
</dbReference>
<dbReference type="SMR" id="B1LPS5"/>
<dbReference type="KEGG" id="ecm:EcSMS35_1095"/>
<dbReference type="HOGENOM" id="CLU_030273_3_2_6"/>
<dbReference type="UniPathway" id="UPA00081">
    <property type="reaction ID" value="UER00518"/>
</dbReference>
<dbReference type="Proteomes" id="UP000007011">
    <property type="component" value="Chromosome"/>
</dbReference>
<dbReference type="GO" id="GO:0008869">
    <property type="term" value="F:galactonate dehydratase activity"/>
    <property type="evidence" value="ECO:0007669"/>
    <property type="project" value="UniProtKB-UniRule"/>
</dbReference>
<dbReference type="GO" id="GO:0000287">
    <property type="term" value="F:magnesium ion binding"/>
    <property type="evidence" value="ECO:0007669"/>
    <property type="project" value="UniProtKB-UniRule"/>
</dbReference>
<dbReference type="GO" id="GO:0009063">
    <property type="term" value="P:amino acid catabolic process"/>
    <property type="evidence" value="ECO:0007669"/>
    <property type="project" value="InterPro"/>
</dbReference>
<dbReference type="GO" id="GO:0034194">
    <property type="term" value="P:D-galactonate catabolic process"/>
    <property type="evidence" value="ECO:0007669"/>
    <property type="project" value="UniProtKB-UniRule"/>
</dbReference>
<dbReference type="CDD" id="cd03325">
    <property type="entry name" value="D-galactonate_dehydratase"/>
    <property type="match status" value="1"/>
</dbReference>
<dbReference type="FunFam" id="3.20.20.120:FF:000008">
    <property type="entry name" value="D-galactonate dehydratase"/>
    <property type="match status" value="1"/>
</dbReference>
<dbReference type="FunFam" id="3.30.390.10:FF:000003">
    <property type="entry name" value="D-galactonate dehydratase"/>
    <property type="match status" value="1"/>
</dbReference>
<dbReference type="Gene3D" id="3.20.20.120">
    <property type="entry name" value="Enolase-like C-terminal domain"/>
    <property type="match status" value="1"/>
</dbReference>
<dbReference type="Gene3D" id="3.30.390.10">
    <property type="entry name" value="Enolase-like, N-terminal domain"/>
    <property type="match status" value="1"/>
</dbReference>
<dbReference type="HAMAP" id="MF_01289">
    <property type="entry name" value="Galacton_dehydrat"/>
    <property type="match status" value="1"/>
</dbReference>
<dbReference type="InterPro" id="IPR034593">
    <property type="entry name" value="DgoD-like"/>
</dbReference>
<dbReference type="InterPro" id="IPR036849">
    <property type="entry name" value="Enolase-like_C_sf"/>
</dbReference>
<dbReference type="InterPro" id="IPR029017">
    <property type="entry name" value="Enolase-like_N"/>
</dbReference>
<dbReference type="InterPro" id="IPR029065">
    <property type="entry name" value="Enolase_C-like"/>
</dbReference>
<dbReference type="InterPro" id="IPR023592">
    <property type="entry name" value="Galactonate_deHydtase"/>
</dbReference>
<dbReference type="InterPro" id="IPR018110">
    <property type="entry name" value="Mandel_Rmase/mucon_lact_enz_CS"/>
</dbReference>
<dbReference type="InterPro" id="IPR013342">
    <property type="entry name" value="Mandelate_racemase_C"/>
</dbReference>
<dbReference type="InterPro" id="IPR013341">
    <property type="entry name" value="Mandelate_racemase_N_dom"/>
</dbReference>
<dbReference type="NCBIfam" id="NF010624">
    <property type="entry name" value="PRK14017.1"/>
    <property type="match status" value="1"/>
</dbReference>
<dbReference type="PANTHER" id="PTHR48080:SF2">
    <property type="entry name" value="D-GALACTONATE DEHYDRATASE"/>
    <property type="match status" value="1"/>
</dbReference>
<dbReference type="PANTHER" id="PTHR48080">
    <property type="entry name" value="D-GALACTONATE DEHYDRATASE-RELATED"/>
    <property type="match status" value="1"/>
</dbReference>
<dbReference type="Pfam" id="PF13378">
    <property type="entry name" value="MR_MLE_C"/>
    <property type="match status" value="1"/>
</dbReference>
<dbReference type="Pfam" id="PF02746">
    <property type="entry name" value="MR_MLE_N"/>
    <property type="match status" value="1"/>
</dbReference>
<dbReference type="SFLD" id="SFLDF00003">
    <property type="entry name" value="D-galactonate_dehydratase"/>
    <property type="match status" value="1"/>
</dbReference>
<dbReference type="SFLD" id="SFLDS00001">
    <property type="entry name" value="Enolase"/>
    <property type="match status" value="1"/>
</dbReference>
<dbReference type="SMART" id="SM00922">
    <property type="entry name" value="MR_MLE"/>
    <property type="match status" value="1"/>
</dbReference>
<dbReference type="SUPFAM" id="SSF51604">
    <property type="entry name" value="Enolase C-terminal domain-like"/>
    <property type="match status" value="1"/>
</dbReference>
<dbReference type="SUPFAM" id="SSF54826">
    <property type="entry name" value="Enolase N-terminal domain-like"/>
    <property type="match status" value="1"/>
</dbReference>
<dbReference type="PROSITE" id="PS00908">
    <property type="entry name" value="MR_MLE_1"/>
    <property type="match status" value="1"/>
</dbReference>
<dbReference type="PROSITE" id="PS00909">
    <property type="entry name" value="MR_MLE_2"/>
    <property type="match status" value="1"/>
</dbReference>
<organism>
    <name type="scientific">Escherichia coli (strain SMS-3-5 / SECEC)</name>
    <dbReference type="NCBI Taxonomy" id="439855"/>
    <lineage>
        <taxon>Bacteria</taxon>
        <taxon>Pseudomonadati</taxon>
        <taxon>Pseudomonadota</taxon>
        <taxon>Gammaproteobacteria</taxon>
        <taxon>Enterobacterales</taxon>
        <taxon>Enterobacteriaceae</taxon>
        <taxon>Escherichia</taxon>
    </lineage>
</organism>